<accession>A3QET2</accession>
<dbReference type="EC" id="3.1.2.6" evidence="1"/>
<dbReference type="EMBL" id="CP000606">
    <property type="protein sequence ID" value="ABO23980.1"/>
    <property type="molecule type" value="Genomic_DNA"/>
</dbReference>
<dbReference type="RefSeq" id="WP_011865912.1">
    <property type="nucleotide sequence ID" value="NC_009092.1"/>
</dbReference>
<dbReference type="SMR" id="A3QET2"/>
<dbReference type="STRING" id="323850.Shew_2114"/>
<dbReference type="KEGG" id="slo:Shew_2114"/>
<dbReference type="eggNOG" id="COG0491">
    <property type="taxonomic scope" value="Bacteria"/>
</dbReference>
<dbReference type="HOGENOM" id="CLU_030571_4_1_6"/>
<dbReference type="OrthoDB" id="9802248at2"/>
<dbReference type="UniPathway" id="UPA00619">
    <property type="reaction ID" value="UER00676"/>
</dbReference>
<dbReference type="Proteomes" id="UP000001558">
    <property type="component" value="Chromosome"/>
</dbReference>
<dbReference type="GO" id="GO:0004416">
    <property type="term" value="F:hydroxyacylglutathione hydrolase activity"/>
    <property type="evidence" value="ECO:0007669"/>
    <property type="project" value="UniProtKB-UniRule"/>
</dbReference>
<dbReference type="GO" id="GO:0046872">
    <property type="term" value="F:metal ion binding"/>
    <property type="evidence" value="ECO:0007669"/>
    <property type="project" value="UniProtKB-KW"/>
</dbReference>
<dbReference type="GO" id="GO:0019243">
    <property type="term" value="P:methylglyoxal catabolic process to D-lactate via S-lactoyl-glutathione"/>
    <property type="evidence" value="ECO:0007669"/>
    <property type="project" value="InterPro"/>
</dbReference>
<dbReference type="CDD" id="cd07723">
    <property type="entry name" value="hydroxyacylglutathione_hydrolase_MBL-fold"/>
    <property type="match status" value="1"/>
</dbReference>
<dbReference type="Gene3D" id="3.60.15.10">
    <property type="entry name" value="Ribonuclease Z/Hydroxyacylglutathione hydrolase-like"/>
    <property type="match status" value="1"/>
</dbReference>
<dbReference type="HAMAP" id="MF_01374">
    <property type="entry name" value="Glyoxalase_2"/>
    <property type="match status" value="1"/>
</dbReference>
<dbReference type="InterPro" id="IPR035680">
    <property type="entry name" value="Clx_II_MBL"/>
</dbReference>
<dbReference type="InterPro" id="IPR050110">
    <property type="entry name" value="Glyoxalase_II_hydrolase"/>
</dbReference>
<dbReference type="InterPro" id="IPR032282">
    <property type="entry name" value="HAGH_C"/>
</dbReference>
<dbReference type="InterPro" id="IPR017782">
    <property type="entry name" value="Hydroxyacylglutathione_Hdrlase"/>
</dbReference>
<dbReference type="InterPro" id="IPR001279">
    <property type="entry name" value="Metallo-B-lactamas"/>
</dbReference>
<dbReference type="InterPro" id="IPR036866">
    <property type="entry name" value="RibonucZ/Hydroxyglut_hydro"/>
</dbReference>
<dbReference type="NCBIfam" id="TIGR03413">
    <property type="entry name" value="GSH_gloB"/>
    <property type="match status" value="1"/>
</dbReference>
<dbReference type="PANTHER" id="PTHR43705">
    <property type="entry name" value="HYDROXYACYLGLUTATHIONE HYDROLASE"/>
    <property type="match status" value="1"/>
</dbReference>
<dbReference type="PANTHER" id="PTHR43705:SF1">
    <property type="entry name" value="HYDROXYACYLGLUTATHIONE HYDROLASE GLOB"/>
    <property type="match status" value="1"/>
</dbReference>
<dbReference type="Pfam" id="PF16123">
    <property type="entry name" value="HAGH_C"/>
    <property type="match status" value="1"/>
</dbReference>
<dbReference type="Pfam" id="PF00753">
    <property type="entry name" value="Lactamase_B"/>
    <property type="match status" value="1"/>
</dbReference>
<dbReference type="PIRSF" id="PIRSF005457">
    <property type="entry name" value="Glx"/>
    <property type="match status" value="1"/>
</dbReference>
<dbReference type="SMART" id="SM00849">
    <property type="entry name" value="Lactamase_B"/>
    <property type="match status" value="1"/>
</dbReference>
<dbReference type="SUPFAM" id="SSF56281">
    <property type="entry name" value="Metallo-hydrolase/oxidoreductase"/>
    <property type="match status" value="1"/>
</dbReference>
<evidence type="ECO:0000255" key="1">
    <source>
        <dbReference type="HAMAP-Rule" id="MF_01374"/>
    </source>
</evidence>
<keyword id="KW-0378">Hydrolase</keyword>
<keyword id="KW-0479">Metal-binding</keyword>
<keyword id="KW-1185">Reference proteome</keyword>
<keyword id="KW-0862">Zinc</keyword>
<comment type="function">
    <text evidence="1">Thiolesterase that catalyzes the hydrolysis of S-D-lactoyl-glutathione to form glutathione and D-lactic acid.</text>
</comment>
<comment type="catalytic activity">
    <reaction evidence="1">
        <text>an S-(2-hydroxyacyl)glutathione + H2O = a 2-hydroxy carboxylate + glutathione + H(+)</text>
        <dbReference type="Rhea" id="RHEA:21864"/>
        <dbReference type="ChEBI" id="CHEBI:15377"/>
        <dbReference type="ChEBI" id="CHEBI:15378"/>
        <dbReference type="ChEBI" id="CHEBI:57925"/>
        <dbReference type="ChEBI" id="CHEBI:58896"/>
        <dbReference type="ChEBI" id="CHEBI:71261"/>
        <dbReference type="EC" id="3.1.2.6"/>
    </reaction>
</comment>
<comment type="cofactor">
    <cofactor evidence="1">
        <name>Zn(2+)</name>
        <dbReference type="ChEBI" id="CHEBI:29105"/>
    </cofactor>
    <text evidence="1">Binds 2 Zn(2+) ions per subunit.</text>
</comment>
<comment type="pathway">
    <text evidence="1">Secondary metabolite metabolism; methylglyoxal degradation; (R)-lactate from methylglyoxal: step 2/2.</text>
</comment>
<comment type="subunit">
    <text evidence="1">Monomer.</text>
</comment>
<comment type="similarity">
    <text evidence="1">Belongs to the metallo-beta-lactamase superfamily. Glyoxalase II family.</text>
</comment>
<name>GLO2_SHELP</name>
<proteinExistence type="inferred from homology"/>
<feature type="chain" id="PRO_1000144808" description="Hydroxyacylglutathione hydrolase">
    <location>
        <begin position="1"/>
        <end position="260"/>
    </location>
</feature>
<feature type="binding site" evidence="1">
    <location>
        <position position="55"/>
    </location>
    <ligand>
        <name>Zn(2+)</name>
        <dbReference type="ChEBI" id="CHEBI:29105"/>
        <label>1</label>
    </ligand>
</feature>
<feature type="binding site" evidence="1">
    <location>
        <position position="57"/>
    </location>
    <ligand>
        <name>Zn(2+)</name>
        <dbReference type="ChEBI" id="CHEBI:29105"/>
        <label>1</label>
    </ligand>
</feature>
<feature type="binding site" evidence="1">
    <location>
        <position position="59"/>
    </location>
    <ligand>
        <name>Zn(2+)</name>
        <dbReference type="ChEBI" id="CHEBI:29105"/>
        <label>2</label>
    </ligand>
</feature>
<feature type="binding site" evidence="1">
    <location>
        <position position="60"/>
    </location>
    <ligand>
        <name>Zn(2+)</name>
        <dbReference type="ChEBI" id="CHEBI:29105"/>
        <label>2</label>
    </ligand>
</feature>
<feature type="binding site" evidence="1">
    <location>
        <position position="116"/>
    </location>
    <ligand>
        <name>Zn(2+)</name>
        <dbReference type="ChEBI" id="CHEBI:29105"/>
        <label>1</label>
    </ligand>
</feature>
<feature type="binding site" evidence="1">
    <location>
        <position position="133"/>
    </location>
    <ligand>
        <name>Zn(2+)</name>
        <dbReference type="ChEBI" id="CHEBI:29105"/>
        <label>1</label>
    </ligand>
</feature>
<feature type="binding site" evidence="1">
    <location>
        <position position="133"/>
    </location>
    <ligand>
        <name>Zn(2+)</name>
        <dbReference type="ChEBI" id="CHEBI:29105"/>
        <label>2</label>
    </ligand>
</feature>
<feature type="binding site" evidence="1">
    <location>
        <position position="171"/>
    </location>
    <ligand>
        <name>Zn(2+)</name>
        <dbReference type="ChEBI" id="CHEBI:29105"/>
        <label>2</label>
    </ligand>
</feature>
<reference key="1">
    <citation type="submission" date="2007-03" db="EMBL/GenBank/DDBJ databases">
        <title>Complete sequence of Shewanella loihica PV-4.</title>
        <authorList>
            <consortium name="US DOE Joint Genome Institute"/>
            <person name="Copeland A."/>
            <person name="Lucas S."/>
            <person name="Lapidus A."/>
            <person name="Barry K."/>
            <person name="Detter J.C."/>
            <person name="Glavina del Rio T."/>
            <person name="Hammon N."/>
            <person name="Israni S."/>
            <person name="Dalin E."/>
            <person name="Tice H."/>
            <person name="Pitluck S."/>
            <person name="Chain P."/>
            <person name="Malfatti S."/>
            <person name="Shin M."/>
            <person name="Vergez L."/>
            <person name="Schmutz J."/>
            <person name="Larimer F."/>
            <person name="Land M."/>
            <person name="Hauser L."/>
            <person name="Kyrpides N."/>
            <person name="Mikhailova N."/>
            <person name="Romine M.F."/>
            <person name="Serres G."/>
            <person name="Fredrickson J."/>
            <person name="Tiedje J."/>
            <person name="Richardson P."/>
        </authorList>
    </citation>
    <scope>NUCLEOTIDE SEQUENCE [LARGE SCALE GENOMIC DNA]</scope>
    <source>
        <strain>ATCC BAA-1088 / PV-4</strain>
    </source>
</reference>
<sequence>MHTVTPIPAFNDNYIWLIHAKDSGGHYVVDPGDAKAVLDYLEQHQIVLDGILITHHHSDHTGGIAELQASHDHKLTVYGPDNENIKGINHPISGQTESVKPEKLDSDAAVFHLPGHTLGHIAYLIDDHLFCGDTLFSAGCGRLFEGTPAQMHHSLQTLAQLDETTLVYPAHEYTQANLAFALTVENDNEALIAHAAKVKQLRDQNLPSLPSSIGLEKQINPFLRPEQASIKQNLSCHFAQDVTDDGTSFTLLRQWKDNFL</sequence>
<organism>
    <name type="scientific">Shewanella loihica (strain ATCC BAA-1088 / PV-4)</name>
    <dbReference type="NCBI Taxonomy" id="323850"/>
    <lineage>
        <taxon>Bacteria</taxon>
        <taxon>Pseudomonadati</taxon>
        <taxon>Pseudomonadota</taxon>
        <taxon>Gammaproteobacteria</taxon>
        <taxon>Alteromonadales</taxon>
        <taxon>Shewanellaceae</taxon>
        <taxon>Shewanella</taxon>
    </lineage>
</organism>
<gene>
    <name evidence="1" type="primary">gloB</name>
    <name type="ordered locus">Shew_2114</name>
</gene>
<protein>
    <recommendedName>
        <fullName evidence="1">Hydroxyacylglutathione hydrolase</fullName>
        <ecNumber evidence="1">3.1.2.6</ecNumber>
    </recommendedName>
    <alternativeName>
        <fullName evidence="1">Glyoxalase II</fullName>
        <shortName evidence="1">Glx II</shortName>
    </alternativeName>
</protein>